<name>MURC_XANE5</name>
<gene>
    <name evidence="1" type="primary">murC</name>
    <name type="ordered locus">XCV0831</name>
</gene>
<proteinExistence type="inferred from homology"/>
<feature type="chain" id="PRO_0000242617" description="UDP-N-acetylmuramate--L-alanine ligase">
    <location>
        <begin position="1"/>
        <end position="477"/>
    </location>
</feature>
<feature type="binding site" evidence="1">
    <location>
        <begin position="122"/>
        <end position="128"/>
    </location>
    <ligand>
        <name>ATP</name>
        <dbReference type="ChEBI" id="CHEBI:30616"/>
    </ligand>
</feature>
<sequence>MIRRLQDSGDLVRAFPRVHFVGIGGTGMSGIAEVMLTLGYEVSGSDNADNAATRRLAKLGARVMRGHSAANVLGTDCVVVSSAIREDNPELMEARSQRIPIMPRAAMLAELMRFRRGIAVAGTHGKTTTTSLAAAVLSEGGLDPTFVIGGQLLAAGANAKLGGGQWLVAEADESDGSFLRLNPLMAVITNIDADHLENYGNDFARVQAAFAEFLQRLPFYGLALLCIDDPEVAALAGKTPRHVMSYGMSENADVRAEDVVQDGPRMRFTLRLPEGTTTPVTLALPGRHNVLNALAAAAIGWQLGVAPDTIARALENFAGIGRRFNDLGEVTTSSGARVRVVDDYGHHPRELEAVFAAARGGWPDKRLVVAFQPHRYSRTRDQFDAFAAVLSTVDALVLSEVYPAGEAPIPGADSRALARAIRARGRSEPVVVGQIAGLAEVLPDVLQDGDLLLMMGAGDIGYVAQHIISNGFVGEQA</sequence>
<dbReference type="EC" id="6.3.2.8" evidence="1"/>
<dbReference type="EMBL" id="AM039952">
    <property type="protein sequence ID" value="CAJ22462.1"/>
    <property type="molecule type" value="Genomic_DNA"/>
</dbReference>
<dbReference type="RefSeq" id="WP_011346425.1">
    <property type="nucleotide sequence ID" value="NZ_CP017190.1"/>
</dbReference>
<dbReference type="SMR" id="Q3BXF1"/>
<dbReference type="STRING" id="456327.BJD11_18640"/>
<dbReference type="GeneID" id="97509164"/>
<dbReference type="KEGG" id="xcv:XCV0831"/>
<dbReference type="eggNOG" id="COG0773">
    <property type="taxonomic scope" value="Bacteria"/>
</dbReference>
<dbReference type="HOGENOM" id="CLU_028104_2_2_6"/>
<dbReference type="UniPathway" id="UPA00219"/>
<dbReference type="Proteomes" id="UP000007069">
    <property type="component" value="Chromosome"/>
</dbReference>
<dbReference type="GO" id="GO:0005737">
    <property type="term" value="C:cytoplasm"/>
    <property type="evidence" value="ECO:0007669"/>
    <property type="project" value="UniProtKB-SubCell"/>
</dbReference>
<dbReference type="GO" id="GO:0005524">
    <property type="term" value="F:ATP binding"/>
    <property type="evidence" value="ECO:0007669"/>
    <property type="project" value="UniProtKB-UniRule"/>
</dbReference>
<dbReference type="GO" id="GO:0008763">
    <property type="term" value="F:UDP-N-acetylmuramate-L-alanine ligase activity"/>
    <property type="evidence" value="ECO:0007669"/>
    <property type="project" value="UniProtKB-UniRule"/>
</dbReference>
<dbReference type="GO" id="GO:0051301">
    <property type="term" value="P:cell division"/>
    <property type="evidence" value="ECO:0007669"/>
    <property type="project" value="UniProtKB-KW"/>
</dbReference>
<dbReference type="GO" id="GO:0071555">
    <property type="term" value="P:cell wall organization"/>
    <property type="evidence" value="ECO:0007669"/>
    <property type="project" value="UniProtKB-KW"/>
</dbReference>
<dbReference type="GO" id="GO:0009252">
    <property type="term" value="P:peptidoglycan biosynthetic process"/>
    <property type="evidence" value="ECO:0007669"/>
    <property type="project" value="UniProtKB-UniRule"/>
</dbReference>
<dbReference type="GO" id="GO:0008360">
    <property type="term" value="P:regulation of cell shape"/>
    <property type="evidence" value="ECO:0007669"/>
    <property type="project" value="UniProtKB-KW"/>
</dbReference>
<dbReference type="Gene3D" id="3.90.190.20">
    <property type="entry name" value="Mur ligase, C-terminal domain"/>
    <property type="match status" value="1"/>
</dbReference>
<dbReference type="Gene3D" id="3.40.1190.10">
    <property type="entry name" value="Mur-like, catalytic domain"/>
    <property type="match status" value="1"/>
</dbReference>
<dbReference type="Gene3D" id="3.40.50.720">
    <property type="entry name" value="NAD(P)-binding Rossmann-like Domain"/>
    <property type="match status" value="1"/>
</dbReference>
<dbReference type="HAMAP" id="MF_00046">
    <property type="entry name" value="MurC"/>
    <property type="match status" value="1"/>
</dbReference>
<dbReference type="InterPro" id="IPR036565">
    <property type="entry name" value="Mur-like_cat_sf"/>
</dbReference>
<dbReference type="InterPro" id="IPR004101">
    <property type="entry name" value="Mur_ligase_C"/>
</dbReference>
<dbReference type="InterPro" id="IPR036615">
    <property type="entry name" value="Mur_ligase_C_dom_sf"/>
</dbReference>
<dbReference type="InterPro" id="IPR013221">
    <property type="entry name" value="Mur_ligase_cen"/>
</dbReference>
<dbReference type="InterPro" id="IPR000713">
    <property type="entry name" value="Mur_ligase_N"/>
</dbReference>
<dbReference type="InterPro" id="IPR050061">
    <property type="entry name" value="MurCDEF_pg_biosynth"/>
</dbReference>
<dbReference type="InterPro" id="IPR005758">
    <property type="entry name" value="UDP-N-AcMur_Ala_ligase_MurC"/>
</dbReference>
<dbReference type="NCBIfam" id="TIGR01082">
    <property type="entry name" value="murC"/>
    <property type="match status" value="1"/>
</dbReference>
<dbReference type="PANTHER" id="PTHR43445:SF3">
    <property type="entry name" value="UDP-N-ACETYLMURAMATE--L-ALANINE LIGASE"/>
    <property type="match status" value="1"/>
</dbReference>
<dbReference type="PANTHER" id="PTHR43445">
    <property type="entry name" value="UDP-N-ACETYLMURAMATE--L-ALANINE LIGASE-RELATED"/>
    <property type="match status" value="1"/>
</dbReference>
<dbReference type="Pfam" id="PF01225">
    <property type="entry name" value="Mur_ligase"/>
    <property type="match status" value="1"/>
</dbReference>
<dbReference type="Pfam" id="PF02875">
    <property type="entry name" value="Mur_ligase_C"/>
    <property type="match status" value="1"/>
</dbReference>
<dbReference type="Pfam" id="PF08245">
    <property type="entry name" value="Mur_ligase_M"/>
    <property type="match status" value="1"/>
</dbReference>
<dbReference type="SUPFAM" id="SSF51984">
    <property type="entry name" value="MurCD N-terminal domain"/>
    <property type="match status" value="1"/>
</dbReference>
<dbReference type="SUPFAM" id="SSF53623">
    <property type="entry name" value="MurD-like peptide ligases, catalytic domain"/>
    <property type="match status" value="1"/>
</dbReference>
<dbReference type="SUPFAM" id="SSF53244">
    <property type="entry name" value="MurD-like peptide ligases, peptide-binding domain"/>
    <property type="match status" value="1"/>
</dbReference>
<keyword id="KW-0067">ATP-binding</keyword>
<keyword id="KW-0131">Cell cycle</keyword>
<keyword id="KW-0132">Cell division</keyword>
<keyword id="KW-0133">Cell shape</keyword>
<keyword id="KW-0961">Cell wall biogenesis/degradation</keyword>
<keyword id="KW-0963">Cytoplasm</keyword>
<keyword id="KW-0436">Ligase</keyword>
<keyword id="KW-0547">Nucleotide-binding</keyword>
<keyword id="KW-0573">Peptidoglycan synthesis</keyword>
<organism>
    <name type="scientific">Xanthomonas euvesicatoria pv. vesicatoria (strain 85-10)</name>
    <name type="common">Xanthomonas campestris pv. vesicatoria</name>
    <dbReference type="NCBI Taxonomy" id="316273"/>
    <lineage>
        <taxon>Bacteria</taxon>
        <taxon>Pseudomonadati</taxon>
        <taxon>Pseudomonadota</taxon>
        <taxon>Gammaproteobacteria</taxon>
        <taxon>Lysobacterales</taxon>
        <taxon>Lysobacteraceae</taxon>
        <taxon>Xanthomonas</taxon>
    </lineage>
</organism>
<comment type="function">
    <text evidence="1">Cell wall formation.</text>
</comment>
<comment type="catalytic activity">
    <reaction evidence="1">
        <text>UDP-N-acetyl-alpha-D-muramate + L-alanine + ATP = UDP-N-acetyl-alpha-D-muramoyl-L-alanine + ADP + phosphate + H(+)</text>
        <dbReference type="Rhea" id="RHEA:23372"/>
        <dbReference type="ChEBI" id="CHEBI:15378"/>
        <dbReference type="ChEBI" id="CHEBI:30616"/>
        <dbReference type="ChEBI" id="CHEBI:43474"/>
        <dbReference type="ChEBI" id="CHEBI:57972"/>
        <dbReference type="ChEBI" id="CHEBI:70757"/>
        <dbReference type="ChEBI" id="CHEBI:83898"/>
        <dbReference type="ChEBI" id="CHEBI:456216"/>
        <dbReference type="EC" id="6.3.2.8"/>
    </reaction>
</comment>
<comment type="pathway">
    <text evidence="1">Cell wall biogenesis; peptidoglycan biosynthesis.</text>
</comment>
<comment type="subcellular location">
    <subcellularLocation>
        <location evidence="1">Cytoplasm</location>
    </subcellularLocation>
</comment>
<comment type="similarity">
    <text evidence="1">Belongs to the MurCDEF family.</text>
</comment>
<evidence type="ECO:0000255" key="1">
    <source>
        <dbReference type="HAMAP-Rule" id="MF_00046"/>
    </source>
</evidence>
<protein>
    <recommendedName>
        <fullName evidence="1">UDP-N-acetylmuramate--L-alanine ligase</fullName>
        <ecNumber evidence="1">6.3.2.8</ecNumber>
    </recommendedName>
    <alternativeName>
        <fullName evidence="1">UDP-N-acetylmuramoyl-L-alanine synthetase</fullName>
    </alternativeName>
</protein>
<reference key="1">
    <citation type="journal article" date="2005" name="J. Bacteriol.">
        <title>Insights into genome plasticity and pathogenicity of the plant pathogenic Bacterium Xanthomonas campestris pv. vesicatoria revealed by the complete genome sequence.</title>
        <authorList>
            <person name="Thieme F."/>
            <person name="Koebnik R."/>
            <person name="Bekel T."/>
            <person name="Berger C."/>
            <person name="Boch J."/>
            <person name="Buettner D."/>
            <person name="Caldana C."/>
            <person name="Gaigalat L."/>
            <person name="Goesmann A."/>
            <person name="Kay S."/>
            <person name="Kirchner O."/>
            <person name="Lanz C."/>
            <person name="Linke B."/>
            <person name="McHardy A.C."/>
            <person name="Meyer F."/>
            <person name="Mittenhuber G."/>
            <person name="Nies D.H."/>
            <person name="Niesbach-Kloesgen U."/>
            <person name="Patschkowski T."/>
            <person name="Rueckert C."/>
            <person name="Rupp O."/>
            <person name="Schneiker S."/>
            <person name="Schuster S.C."/>
            <person name="Vorhoelter F.J."/>
            <person name="Weber E."/>
            <person name="Puehler A."/>
            <person name="Bonas U."/>
            <person name="Bartels D."/>
            <person name="Kaiser O."/>
        </authorList>
    </citation>
    <scope>NUCLEOTIDE SEQUENCE [LARGE SCALE GENOMIC DNA]</scope>
    <source>
        <strain>85-10</strain>
    </source>
</reference>
<accession>Q3BXF1</accession>